<comment type="function">
    <text evidence="1">Catalyzes the decarboxylation of orotidine 5'-monophosphate (OMP) to uridine 5'-monophosphate (UMP).</text>
</comment>
<comment type="catalytic activity">
    <reaction evidence="1">
        <text>orotidine 5'-phosphate + H(+) = UMP + CO2</text>
        <dbReference type="Rhea" id="RHEA:11596"/>
        <dbReference type="ChEBI" id="CHEBI:15378"/>
        <dbReference type="ChEBI" id="CHEBI:16526"/>
        <dbReference type="ChEBI" id="CHEBI:57538"/>
        <dbReference type="ChEBI" id="CHEBI:57865"/>
        <dbReference type="EC" id="4.1.1.23"/>
    </reaction>
</comment>
<comment type="pathway">
    <text evidence="1">Pyrimidine metabolism; UMP biosynthesis via de novo pathway; UMP from orotate: step 2/2.</text>
</comment>
<comment type="subunit">
    <text evidence="1">Homodimer.</text>
</comment>
<comment type="similarity">
    <text evidence="1">Belongs to the OMP decarboxylase family. Type 1 subfamily.</text>
</comment>
<organism>
    <name type="scientific">Rhizobium rhizogenes (strain K84 / ATCC BAA-868)</name>
    <name type="common">Agrobacterium radiobacter</name>
    <dbReference type="NCBI Taxonomy" id="311403"/>
    <lineage>
        <taxon>Bacteria</taxon>
        <taxon>Pseudomonadati</taxon>
        <taxon>Pseudomonadota</taxon>
        <taxon>Alphaproteobacteria</taxon>
        <taxon>Hyphomicrobiales</taxon>
        <taxon>Rhizobiaceae</taxon>
        <taxon>Rhizobium/Agrobacterium group</taxon>
        <taxon>Rhizobium</taxon>
    </lineage>
</organism>
<keyword id="KW-0210">Decarboxylase</keyword>
<keyword id="KW-0456">Lyase</keyword>
<keyword id="KW-0665">Pyrimidine biosynthesis</keyword>
<feature type="chain" id="PRO_1000164554" description="Orotidine 5'-phosphate decarboxylase">
    <location>
        <begin position="1"/>
        <end position="230"/>
    </location>
</feature>
<feature type="active site" description="Proton donor" evidence="1">
    <location>
        <position position="63"/>
    </location>
</feature>
<feature type="binding site" evidence="1">
    <location>
        <position position="12"/>
    </location>
    <ligand>
        <name>substrate</name>
    </ligand>
</feature>
<feature type="binding site" evidence="1">
    <location>
        <position position="34"/>
    </location>
    <ligand>
        <name>substrate</name>
    </ligand>
</feature>
<feature type="binding site" evidence="1">
    <location>
        <begin position="61"/>
        <end position="70"/>
    </location>
    <ligand>
        <name>substrate</name>
    </ligand>
</feature>
<feature type="binding site" evidence="1">
    <location>
        <position position="116"/>
    </location>
    <ligand>
        <name>substrate</name>
    </ligand>
</feature>
<feature type="binding site" evidence="1">
    <location>
        <position position="177"/>
    </location>
    <ligand>
        <name>substrate</name>
    </ligand>
</feature>
<feature type="binding site" evidence="1">
    <location>
        <position position="186"/>
    </location>
    <ligand>
        <name>substrate</name>
    </ligand>
</feature>
<feature type="binding site" evidence="1">
    <location>
        <position position="207"/>
    </location>
    <ligand>
        <name>substrate</name>
    </ligand>
</feature>
<evidence type="ECO:0000255" key="1">
    <source>
        <dbReference type="HAMAP-Rule" id="MF_01200"/>
    </source>
</evidence>
<reference key="1">
    <citation type="journal article" date="2009" name="J. Bacteriol.">
        <title>Genome sequences of three Agrobacterium biovars help elucidate the evolution of multichromosome genomes in bacteria.</title>
        <authorList>
            <person name="Slater S.C."/>
            <person name="Goldman B.S."/>
            <person name="Goodner B."/>
            <person name="Setubal J.C."/>
            <person name="Farrand S.K."/>
            <person name="Nester E.W."/>
            <person name="Burr T.J."/>
            <person name="Banta L."/>
            <person name="Dickerman A.W."/>
            <person name="Paulsen I."/>
            <person name="Otten L."/>
            <person name="Suen G."/>
            <person name="Welch R."/>
            <person name="Almeida N.F."/>
            <person name="Arnold F."/>
            <person name="Burton O.T."/>
            <person name="Du Z."/>
            <person name="Ewing A."/>
            <person name="Godsy E."/>
            <person name="Heisel S."/>
            <person name="Houmiel K.L."/>
            <person name="Jhaveri J."/>
            <person name="Lu J."/>
            <person name="Miller N.M."/>
            <person name="Norton S."/>
            <person name="Chen Q."/>
            <person name="Phoolcharoen W."/>
            <person name="Ohlin V."/>
            <person name="Ondrusek D."/>
            <person name="Pride N."/>
            <person name="Stricklin S.L."/>
            <person name="Sun J."/>
            <person name="Wheeler C."/>
            <person name="Wilson L."/>
            <person name="Zhu H."/>
            <person name="Wood D.W."/>
        </authorList>
    </citation>
    <scope>NUCLEOTIDE SEQUENCE [LARGE SCALE GENOMIC DNA]</scope>
    <source>
        <strain>K84 / ATCC BAA-868</strain>
    </source>
</reference>
<gene>
    <name evidence="1" type="primary">pyrF</name>
    <name type="ordered locus">Arad_0538</name>
</gene>
<accession>B9J7M8</accession>
<dbReference type="EC" id="4.1.1.23" evidence="1"/>
<dbReference type="EMBL" id="CP000628">
    <property type="protein sequence ID" value="ACM25200.1"/>
    <property type="molecule type" value="Genomic_DNA"/>
</dbReference>
<dbReference type="RefSeq" id="WP_007702833.1">
    <property type="nucleotide sequence ID" value="NC_011985.1"/>
</dbReference>
<dbReference type="SMR" id="B9J7M8"/>
<dbReference type="STRING" id="311403.Arad_0538"/>
<dbReference type="GeneID" id="86850848"/>
<dbReference type="KEGG" id="ara:Arad_0538"/>
<dbReference type="eggNOG" id="COG0284">
    <property type="taxonomic scope" value="Bacteria"/>
</dbReference>
<dbReference type="HOGENOM" id="CLU_067069_1_0_5"/>
<dbReference type="UniPathway" id="UPA00070">
    <property type="reaction ID" value="UER00120"/>
</dbReference>
<dbReference type="Proteomes" id="UP000001600">
    <property type="component" value="Chromosome 1"/>
</dbReference>
<dbReference type="GO" id="GO:0005829">
    <property type="term" value="C:cytosol"/>
    <property type="evidence" value="ECO:0007669"/>
    <property type="project" value="TreeGrafter"/>
</dbReference>
<dbReference type="GO" id="GO:0004590">
    <property type="term" value="F:orotidine-5'-phosphate decarboxylase activity"/>
    <property type="evidence" value="ECO:0007669"/>
    <property type="project" value="UniProtKB-UniRule"/>
</dbReference>
<dbReference type="GO" id="GO:0006207">
    <property type="term" value="P:'de novo' pyrimidine nucleobase biosynthetic process"/>
    <property type="evidence" value="ECO:0007669"/>
    <property type="project" value="InterPro"/>
</dbReference>
<dbReference type="GO" id="GO:0044205">
    <property type="term" value="P:'de novo' UMP biosynthetic process"/>
    <property type="evidence" value="ECO:0007669"/>
    <property type="project" value="UniProtKB-UniRule"/>
</dbReference>
<dbReference type="CDD" id="cd04725">
    <property type="entry name" value="OMP_decarboxylase_like"/>
    <property type="match status" value="1"/>
</dbReference>
<dbReference type="Gene3D" id="3.20.20.70">
    <property type="entry name" value="Aldolase class I"/>
    <property type="match status" value="1"/>
</dbReference>
<dbReference type="HAMAP" id="MF_01200_B">
    <property type="entry name" value="OMPdecase_type1_B"/>
    <property type="match status" value="1"/>
</dbReference>
<dbReference type="InterPro" id="IPR013785">
    <property type="entry name" value="Aldolase_TIM"/>
</dbReference>
<dbReference type="InterPro" id="IPR014732">
    <property type="entry name" value="OMPdecase"/>
</dbReference>
<dbReference type="InterPro" id="IPR018089">
    <property type="entry name" value="OMPdecase_AS"/>
</dbReference>
<dbReference type="InterPro" id="IPR047596">
    <property type="entry name" value="OMPdecase_bac"/>
</dbReference>
<dbReference type="InterPro" id="IPR001754">
    <property type="entry name" value="OMPdeCOase_dom"/>
</dbReference>
<dbReference type="InterPro" id="IPR011060">
    <property type="entry name" value="RibuloseP-bd_barrel"/>
</dbReference>
<dbReference type="NCBIfam" id="NF001273">
    <property type="entry name" value="PRK00230.1"/>
    <property type="match status" value="1"/>
</dbReference>
<dbReference type="NCBIfam" id="TIGR01740">
    <property type="entry name" value="pyrF"/>
    <property type="match status" value="1"/>
</dbReference>
<dbReference type="PANTHER" id="PTHR32119">
    <property type="entry name" value="OROTIDINE 5'-PHOSPHATE DECARBOXYLASE"/>
    <property type="match status" value="1"/>
</dbReference>
<dbReference type="PANTHER" id="PTHR32119:SF2">
    <property type="entry name" value="OROTIDINE 5'-PHOSPHATE DECARBOXYLASE"/>
    <property type="match status" value="1"/>
</dbReference>
<dbReference type="Pfam" id="PF00215">
    <property type="entry name" value="OMPdecase"/>
    <property type="match status" value="1"/>
</dbReference>
<dbReference type="SMART" id="SM00934">
    <property type="entry name" value="OMPdecase"/>
    <property type="match status" value="1"/>
</dbReference>
<dbReference type="SUPFAM" id="SSF51366">
    <property type="entry name" value="Ribulose-phoshate binding barrel"/>
    <property type="match status" value="1"/>
</dbReference>
<dbReference type="PROSITE" id="PS00156">
    <property type="entry name" value="OMPDECASE"/>
    <property type="match status" value="1"/>
</dbReference>
<name>PYRF_RHIR8</name>
<sequence length="230" mass="24337">MTARDRLIVGLDVPNLQEAEKVVSALGDDILYYKIGYQLAFAGGLEFARDLAKDGKKIFLDMKLLDIDNTVASGVENIVKMGMSMLTLHAYPKAMKAAVAAAKGSDLCLLGVTVLTSMDEEDLIAAGYEYDPHTLVLRRAEQALLAGMGGIVCSAEEASAVRKIIGPDMALVTPGIRPAGSDKGDQKRVMTPAEGIRAGSSHLVVARPIVKAADPREAARAILAEMDAAL</sequence>
<protein>
    <recommendedName>
        <fullName evidence="1">Orotidine 5'-phosphate decarboxylase</fullName>
        <ecNumber evidence="1">4.1.1.23</ecNumber>
    </recommendedName>
    <alternativeName>
        <fullName evidence="1">OMP decarboxylase</fullName>
        <shortName evidence="1">OMPDCase</shortName>
        <shortName evidence="1">OMPdecase</shortName>
    </alternativeName>
</protein>
<proteinExistence type="inferred from homology"/>